<dbReference type="EMBL" id="X14767">
    <property type="protein sequence ID" value="CAA32875.1"/>
    <property type="molecule type" value="mRNA"/>
</dbReference>
<dbReference type="EMBL" id="M59216">
    <property type="protein sequence ID" value="AAA35862.1"/>
    <property type="molecule type" value="Genomic_DNA"/>
</dbReference>
<dbReference type="EMBL" id="M59212">
    <property type="protein sequence ID" value="AAA35862.1"/>
    <property type="status" value="JOINED"/>
    <property type="molecule type" value="Genomic_DNA"/>
</dbReference>
<dbReference type="EMBL" id="M59214">
    <property type="protein sequence ID" value="AAA35862.1"/>
    <property type="status" value="JOINED"/>
    <property type="molecule type" value="Genomic_DNA"/>
</dbReference>
<dbReference type="EMBL" id="M59215">
    <property type="protein sequence ID" value="AAA35862.1"/>
    <property type="status" value="JOINED"/>
    <property type="molecule type" value="Genomic_DNA"/>
</dbReference>
<dbReference type="EMBL" id="KJ535054">
    <property type="protein sequence ID" value="AHW56693.1"/>
    <property type="molecule type" value="mRNA"/>
</dbReference>
<dbReference type="EMBL" id="AK312720">
    <property type="protein sequence ID" value="BAG35594.1"/>
    <property type="molecule type" value="mRNA"/>
</dbReference>
<dbReference type="EMBL" id="AC097712">
    <property type="status" value="NOT_ANNOTATED_CDS"/>
    <property type="molecule type" value="Genomic_DNA"/>
</dbReference>
<dbReference type="EMBL" id="AC105394">
    <property type="status" value="NOT_ANNOTATED_CDS"/>
    <property type="molecule type" value="Genomic_DNA"/>
</dbReference>
<dbReference type="EMBL" id="AC107383">
    <property type="status" value="NOT_ANNOTATED_CDS"/>
    <property type="molecule type" value="Genomic_DNA"/>
</dbReference>
<dbReference type="EMBL" id="AC107392">
    <property type="status" value="NOT_ANNOTATED_CDS"/>
    <property type="molecule type" value="Genomic_DNA"/>
</dbReference>
<dbReference type="EMBL" id="CH471069">
    <property type="protein sequence ID" value="EAW93031.1"/>
    <property type="molecule type" value="Genomic_DNA"/>
</dbReference>
<dbReference type="EMBL" id="BC022449">
    <property type="protein sequence ID" value="AAH22449.1"/>
    <property type="molecule type" value="mRNA"/>
</dbReference>
<dbReference type="EMBL" id="S70733">
    <property type="protein sequence ID" value="AAB30712.1"/>
    <property type="molecule type" value="mRNA"/>
</dbReference>
<dbReference type="CCDS" id="CCDS3474.1">
    <molecule id="P18505-1"/>
</dbReference>
<dbReference type="PIR" id="A40336">
    <property type="entry name" value="A40336"/>
</dbReference>
<dbReference type="RefSeq" id="NP_000803.2">
    <molecule id="P18505-1"/>
    <property type="nucleotide sequence ID" value="NM_000812.4"/>
</dbReference>
<dbReference type="PDB" id="9CTV">
    <property type="method" value="EM"/>
    <property type="resolution" value="3.36 A"/>
    <property type="chains" value="D=26-474"/>
</dbReference>
<dbReference type="PDB" id="9CXB">
    <property type="method" value="EM"/>
    <property type="resolution" value="3.33 A"/>
    <property type="chains" value="C=26-474"/>
</dbReference>
<dbReference type="PDB" id="9CXD">
    <property type="method" value="EM"/>
    <property type="resolution" value="3.36 A"/>
    <property type="chains" value="C/D=26-474"/>
</dbReference>
<dbReference type="PDBsum" id="9CTV"/>
<dbReference type="PDBsum" id="9CXB"/>
<dbReference type="PDBsum" id="9CXD"/>
<dbReference type="EMDB" id="EMD-45920"/>
<dbReference type="EMDB" id="EMD-45984"/>
<dbReference type="EMDB" id="EMD-45986"/>
<dbReference type="SMR" id="P18505"/>
<dbReference type="BioGRID" id="108834">
    <property type="interactions" value="5"/>
</dbReference>
<dbReference type="ComplexPortal" id="CPX-8636">
    <property type="entry name" value="GABA-A receptor, alpha1-beta1-gamma2"/>
</dbReference>
<dbReference type="ComplexPortal" id="CPX-8702">
    <property type="entry name" value="GABA-A receptor, alpha2-beta1-gamma2 complex"/>
</dbReference>
<dbReference type="ComplexPortal" id="CPX-8721">
    <property type="entry name" value="GABA-A receptor, alpha3-beta1-gamma2 complex"/>
</dbReference>
<dbReference type="ComplexPortal" id="CPX-8723">
    <property type="entry name" value="GABA-A receptor, alpha4-beta1-gamma2 complex"/>
</dbReference>
<dbReference type="ComplexPortal" id="CPX-8724">
    <property type="entry name" value="GABA-A receptor, alpha5-beta1-gamma2 complex"/>
</dbReference>
<dbReference type="ComplexPortal" id="CPX-8727">
    <property type="entry name" value="GABA-A receptor alpha6-beta1-gamma2 complex"/>
</dbReference>
<dbReference type="CORUM" id="P18505"/>
<dbReference type="FunCoup" id="P18505">
    <property type="interactions" value="698"/>
</dbReference>
<dbReference type="IntAct" id="P18505">
    <property type="interactions" value="5"/>
</dbReference>
<dbReference type="STRING" id="9606.ENSP00000295454"/>
<dbReference type="BindingDB" id="P18505"/>
<dbReference type="ChEMBL" id="CHEMBL4558"/>
<dbReference type="DrugBank" id="DB12537">
    <property type="generic name" value="1,2-Benzodiazepine"/>
</dbReference>
<dbReference type="DrugBank" id="DB00546">
    <property type="generic name" value="Adinazolam"/>
</dbReference>
<dbReference type="DrugBank" id="DB00404">
    <property type="generic name" value="Alprazolam"/>
</dbReference>
<dbReference type="DrugBank" id="DB00543">
    <property type="generic name" value="Amoxapine"/>
</dbReference>
<dbReference type="DrugBank" id="DB11901">
    <property type="generic name" value="Apalutamide"/>
</dbReference>
<dbReference type="DrugBank" id="DB14719">
    <property type="generic name" value="Bentazepam"/>
</dbReference>
<dbReference type="DrugBank" id="DB11859">
    <property type="generic name" value="Brexanolone"/>
</dbReference>
<dbReference type="DrugBank" id="DB01558">
    <property type="generic name" value="Bromazepam"/>
</dbReference>
<dbReference type="DrugBank" id="DB09017">
    <property type="generic name" value="Brotizolam"/>
</dbReference>
<dbReference type="DrugBank" id="DB00237">
    <property type="generic name" value="Butabarbital"/>
</dbReference>
<dbReference type="DrugBank" id="DB00241">
    <property type="generic name" value="Butalbital"/>
</dbReference>
<dbReference type="DrugBank" id="DB01489">
    <property type="generic name" value="Camazepam"/>
</dbReference>
<dbReference type="DrugBank" id="DB00475">
    <property type="generic name" value="Chlordiazepoxide"/>
</dbReference>
<dbReference type="DrugBank" id="DB14715">
    <property type="generic name" value="Cinazepam"/>
</dbReference>
<dbReference type="DrugBank" id="DB01594">
    <property type="generic name" value="Cinolazepam"/>
</dbReference>
<dbReference type="DrugBank" id="DB00349">
    <property type="generic name" value="Clobazam"/>
</dbReference>
<dbReference type="DrugBank" id="DB01068">
    <property type="generic name" value="Clonazepam"/>
</dbReference>
<dbReference type="DrugBank" id="DB00628">
    <property type="generic name" value="Clorazepic acid"/>
</dbReference>
<dbReference type="DrugBank" id="DB01559">
    <property type="generic name" value="Clotiazepam"/>
</dbReference>
<dbReference type="DrugBank" id="DB01553">
    <property type="generic name" value="Cloxazolam"/>
</dbReference>
<dbReference type="DrugBank" id="DB00363">
    <property type="generic name" value="Clozapine"/>
</dbReference>
<dbReference type="DrugBank" id="DB01511">
    <property type="generic name" value="Delorazepam"/>
</dbReference>
<dbReference type="DrugBank" id="DB01189">
    <property type="generic name" value="Desflurane"/>
</dbReference>
<dbReference type="DrugBank" id="DB00829">
    <property type="generic name" value="Diazepam"/>
</dbReference>
<dbReference type="DrugBank" id="DB13837">
    <property type="generic name" value="Doxefazepam"/>
</dbReference>
<dbReference type="DrugBank" id="DB00228">
    <property type="generic name" value="Enflurane"/>
</dbReference>
<dbReference type="DrugBank" id="DB01215">
    <property type="generic name" value="Estazolam"/>
</dbReference>
<dbReference type="DrugBank" id="DB00402">
    <property type="generic name" value="Eszopiclone"/>
</dbReference>
<dbReference type="DrugBank" id="DB00898">
    <property type="generic name" value="Ethanol"/>
</dbReference>
<dbReference type="DrugBank" id="DB00189">
    <property type="generic name" value="Ethchlorvynol"/>
</dbReference>
<dbReference type="DrugBank" id="DB01545">
    <property type="generic name" value="Ethyl loflazepate"/>
</dbReference>
<dbReference type="DrugBank" id="DB09166">
    <property type="generic name" value="Etizolam"/>
</dbReference>
<dbReference type="DrugBank" id="DB00292">
    <property type="generic name" value="Etomidate"/>
</dbReference>
<dbReference type="DrugBank" id="DB01567">
    <property type="generic name" value="Fludiazepam"/>
</dbReference>
<dbReference type="DrugBank" id="DB01205">
    <property type="generic name" value="Flumazenil"/>
</dbReference>
<dbReference type="DrugBank" id="DB01544">
    <property type="generic name" value="Flunitrazepam"/>
</dbReference>
<dbReference type="DrugBank" id="DB00690">
    <property type="generic name" value="Flurazepam"/>
</dbReference>
<dbReference type="DrugBank" id="DB05087">
    <property type="generic name" value="Ganaxolone"/>
</dbReference>
<dbReference type="DrugBank" id="DB01437">
    <property type="generic name" value="Glutethimide"/>
</dbReference>
<dbReference type="DrugBank" id="DB00801">
    <property type="generic name" value="Halazepam"/>
</dbReference>
<dbReference type="DrugBank" id="DB01159">
    <property type="generic name" value="Halothane"/>
</dbReference>
<dbReference type="DrugBank" id="DB00753">
    <property type="generic name" value="Isoflurane"/>
</dbReference>
<dbReference type="DrugBank" id="DB01587">
    <property type="generic name" value="Ketazolam"/>
</dbReference>
<dbReference type="DrugBank" id="DB00555">
    <property type="generic name" value="Lamotrigine"/>
</dbReference>
<dbReference type="DrugBank" id="DB00431">
    <property type="generic name" value="Lindane"/>
</dbReference>
<dbReference type="DrugBank" id="DB13643">
    <property type="generic name" value="Loprazolam"/>
</dbReference>
<dbReference type="DrugBank" id="DB00186">
    <property type="generic name" value="Lorazepam"/>
</dbReference>
<dbReference type="DrugBank" id="DB13872">
    <property type="generic name" value="Lormetazepam"/>
</dbReference>
<dbReference type="DrugBank" id="DB13437">
    <property type="generic name" value="Medazepam"/>
</dbReference>
<dbReference type="DrugBank" id="DB00603">
    <property type="generic name" value="Medroxyprogesterone acetate"/>
</dbReference>
<dbReference type="DrugBank" id="DB01043">
    <property type="generic name" value="Memantine"/>
</dbReference>
<dbReference type="DrugBank" id="DB00371">
    <property type="generic name" value="Meprobamate"/>
</dbReference>
<dbReference type="DrugBank" id="DB00463">
    <property type="generic name" value="Metharbital"/>
</dbReference>
<dbReference type="DrugBank" id="DB01028">
    <property type="generic name" value="Methoxyflurane"/>
</dbReference>
<dbReference type="DrugBank" id="DB01107">
    <property type="generic name" value="Methyprylon"/>
</dbReference>
<dbReference type="DrugBank" id="DB15489">
    <property type="generic name" value="Mexazolam"/>
</dbReference>
<dbReference type="DrugBank" id="DB00683">
    <property type="generic name" value="Midazolam"/>
</dbReference>
<dbReference type="DrugBank" id="DB01595">
    <property type="generic name" value="Nitrazepam"/>
</dbReference>
<dbReference type="DrugBank" id="DB14028">
    <property type="generic name" value="Nordazepam"/>
</dbReference>
<dbReference type="DrugBank" id="DB00842">
    <property type="generic name" value="Oxazepam"/>
</dbReference>
<dbReference type="DrugBank" id="DB14672">
    <property type="generic name" value="Oxazepam acetate"/>
</dbReference>
<dbReference type="DrugBank" id="DB00312">
    <property type="generic name" value="Pentobarbital"/>
</dbReference>
<dbReference type="DrugBank" id="DB00252">
    <property type="generic name" value="Phenytoin"/>
</dbReference>
<dbReference type="DrugBank" id="DB13335">
    <property type="generic name" value="Pinazepam"/>
</dbReference>
<dbReference type="DrugBank" id="DB01708">
    <property type="generic name" value="Prasterone"/>
</dbReference>
<dbReference type="DrugBank" id="DB01588">
    <property type="generic name" value="Prazepam"/>
</dbReference>
<dbReference type="DrugBank" id="DB00794">
    <property type="generic name" value="Primidone"/>
</dbReference>
<dbReference type="DrugBank" id="DB00818">
    <property type="generic name" value="Propofol"/>
</dbReference>
<dbReference type="DrugBank" id="DB01589">
    <property type="generic name" value="Quazepam"/>
</dbReference>
<dbReference type="DrugBank" id="DB12404">
    <property type="generic name" value="Remimazolam"/>
</dbReference>
<dbReference type="DrugBank" id="DB01236">
    <property type="generic name" value="Sevoflurane"/>
</dbReference>
<dbReference type="DrugBank" id="DB09118">
    <property type="generic name" value="Stiripentol"/>
</dbReference>
<dbReference type="DrugBank" id="DB00306">
    <property type="generic name" value="Talbutal"/>
</dbReference>
<dbReference type="DrugBank" id="DB01956">
    <property type="generic name" value="Taurine"/>
</dbReference>
<dbReference type="DrugBank" id="DB00231">
    <property type="generic name" value="Temazepam"/>
</dbReference>
<dbReference type="DrugBank" id="DB11582">
    <property type="generic name" value="Thiocolchicoside"/>
</dbReference>
<dbReference type="DrugBank" id="DB00897">
    <property type="generic name" value="Triazolam"/>
</dbReference>
<dbReference type="DrugBank" id="DB15490">
    <property type="generic name" value="Zuranolone"/>
</dbReference>
<dbReference type="DrugCentral" id="P18505"/>
<dbReference type="GlyCosmos" id="P18505">
    <property type="glycosylation" value="2 sites, No reported glycans"/>
</dbReference>
<dbReference type="GlyGen" id="P18505">
    <property type="glycosylation" value="2 sites, 1 N-linked glycan (1 site)"/>
</dbReference>
<dbReference type="iPTMnet" id="P18505"/>
<dbReference type="PhosphoSitePlus" id="P18505"/>
<dbReference type="BioMuta" id="GABRB1"/>
<dbReference type="DMDM" id="23831128"/>
<dbReference type="MassIVE" id="P18505"/>
<dbReference type="PaxDb" id="9606-ENSP00000295454"/>
<dbReference type="PeptideAtlas" id="P18505"/>
<dbReference type="ProteomicsDB" id="53568">
    <molecule id="P18505-1"/>
</dbReference>
<dbReference type="ABCD" id="P18505">
    <property type="antibodies" value="1 sequenced antibody"/>
</dbReference>
<dbReference type="Antibodypedia" id="12048">
    <property type="antibodies" value="457 antibodies from 41 providers"/>
</dbReference>
<dbReference type="DNASU" id="2560"/>
<dbReference type="Ensembl" id="ENST00000295454.8">
    <molecule id="P18505-1"/>
    <property type="protein sequence ID" value="ENSP00000295454.3"/>
    <property type="gene ID" value="ENSG00000163288.14"/>
</dbReference>
<dbReference type="Ensembl" id="ENST00000510909.1">
    <molecule id="P18505-2"/>
    <property type="protein sequence ID" value="ENSP00000426766.1"/>
    <property type="gene ID" value="ENSG00000163288.14"/>
</dbReference>
<dbReference type="GeneID" id="2560"/>
<dbReference type="KEGG" id="hsa:2560"/>
<dbReference type="MANE-Select" id="ENST00000295454.8">
    <property type="protein sequence ID" value="ENSP00000295454.3"/>
    <property type="RefSeq nucleotide sequence ID" value="NM_000812.4"/>
    <property type="RefSeq protein sequence ID" value="NP_000803.2"/>
</dbReference>
<dbReference type="UCSC" id="uc062wjg.1">
    <molecule id="P18505-1"/>
    <property type="organism name" value="human"/>
</dbReference>
<dbReference type="AGR" id="HGNC:4081"/>
<dbReference type="CTD" id="2560"/>
<dbReference type="DisGeNET" id="2560"/>
<dbReference type="GeneCards" id="GABRB1"/>
<dbReference type="HGNC" id="HGNC:4081">
    <property type="gene designation" value="GABRB1"/>
</dbReference>
<dbReference type="HPA" id="ENSG00000163288">
    <property type="expression patterns" value="Tissue enhanced (brain, heart muscle)"/>
</dbReference>
<dbReference type="MalaCards" id="GABRB1"/>
<dbReference type="MIM" id="137190">
    <property type="type" value="gene"/>
</dbReference>
<dbReference type="MIM" id="617153">
    <property type="type" value="phenotype"/>
</dbReference>
<dbReference type="neXtProt" id="NX_P18505"/>
<dbReference type="OpenTargets" id="ENSG00000163288"/>
<dbReference type="PharmGKB" id="PA28495"/>
<dbReference type="VEuPathDB" id="HostDB:ENSG00000163288"/>
<dbReference type="eggNOG" id="KOG3643">
    <property type="taxonomic scope" value="Eukaryota"/>
</dbReference>
<dbReference type="GeneTree" id="ENSGT00940000154245"/>
<dbReference type="HOGENOM" id="CLU_010920_0_2_1"/>
<dbReference type="InParanoid" id="P18505"/>
<dbReference type="OMA" id="DRPIGHK"/>
<dbReference type="OrthoDB" id="8890589at2759"/>
<dbReference type="PAN-GO" id="P18505">
    <property type="GO annotations" value="13 GO annotations based on evolutionary models"/>
</dbReference>
<dbReference type="PhylomeDB" id="P18505"/>
<dbReference type="TreeFam" id="TF315453"/>
<dbReference type="PathwayCommons" id="P18505"/>
<dbReference type="Reactome" id="R-HSA-1236394">
    <property type="pathway name" value="Signaling by ERBB4"/>
</dbReference>
<dbReference type="Reactome" id="R-HSA-977443">
    <property type="pathway name" value="GABA receptor activation"/>
</dbReference>
<dbReference type="SignaLink" id="P18505"/>
<dbReference type="SIGNOR" id="P18505"/>
<dbReference type="BioGRID-ORCS" id="2560">
    <property type="hits" value="9 hits in 1161 CRISPR screens"/>
</dbReference>
<dbReference type="ChiTaRS" id="GABRB1">
    <property type="organism name" value="human"/>
</dbReference>
<dbReference type="GeneWiki" id="GABRB1"/>
<dbReference type="GenomeRNAi" id="2560"/>
<dbReference type="Pharos" id="P18505">
    <property type="development level" value="Tclin"/>
</dbReference>
<dbReference type="PRO" id="PR:P18505"/>
<dbReference type="Proteomes" id="UP000005640">
    <property type="component" value="Chromosome 4"/>
</dbReference>
<dbReference type="RNAct" id="P18505">
    <property type="molecule type" value="protein"/>
</dbReference>
<dbReference type="Bgee" id="ENSG00000163288">
    <property type="expression patterns" value="Expressed in Brodmann (1909) area 23 and 126 other cell types or tissues"/>
</dbReference>
<dbReference type="ExpressionAtlas" id="P18505">
    <property type="expression patterns" value="baseline and differential"/>
</dbReference>
<dbReference type="GO" id="GO:0034707">
    <property type="term" value="C:chloride channel complex"/>
    <property type="evidence" value="ECO:0007669"/>
    <property type="project" value="UniProtKB-KW"/>
</dbReference>
<dbReference type="GO" id="GO:0030425">
    <property type="term" value="C:dendrite"/>
    <property type="evidence" value="ECO:0007669"/>
    <property type="project" value="Ensembl"/>
</dbReference>
<dbReference type="GO" id="GO:1902711">
    <property type="term" value="C:GABA-A receptor complex"/>
    <property type="evidence" value="ECO:0000314"/>
    <property type="project" value="UniProtKB"/>
</dbReference>
<dbReference type="GO" id="GO:0098982">
    <property type="term" value="C:GABA-ergic synapse"/>
    <property type="evidence" value="ECO:0007669"/>
    <property type="project" value="Ensembl"/>
</dbReference>
<dbReference type="GO" id="GO:0005635">
    <property type="term" value="C:nuclear envelope"/>
    <property type="evidence" value="ECO:0007669"/>
    <property type="project" value="Ensembl"/>
</dbReference>
<dbReference type="GO" id="GO:0005886">
    <property type="term" value="C:plasma membrane"/>
    <property type="evidence" value="ECO:0000314"/>
    <property type="project" value="UniProtKB"/>
</dbReference>
<dbReference type="GO" id="GO:0099634">
    <property type="term" value="C:postsynaptic specialization membrane"/>
    <property type="evidence" value="ECO:0007669"/>
    <property type="project" value="Ensembl"/>
</dbReference>
<dbReference type="GO" id="GO:0048787">
    <property type="term" value="C:presynaptic active zone membrane"/>
    <property type="evidence" value="ECO:0007669"/>
    <property type="project" value="Ensembl"/>
</dbReference>
<dbReference type="GO" id="GO:0098685">
    <property type="term" value="C:Schaffer collateral - CA1 synapse"/>
    <property type="evidence" value="ECO:0007669"/>
    <property type="project" value="Ensembl"/>
</dbReference>
<dbReference type="GO" id="GO:0150047">
    <property type="term" value="F:G protein-coupled neurotransmitter receptor activity involved in regulation of presynaptic membrane potential"/>
    <property type="evidence" value="ECO:0007669"/>
    <property type="project" value="Ensembl"/>
</dbReference>
<dbReference type="GO" id="GO:0050811">
    <property type="term" value="F:GABA receptor binding"/>
    <property type="evidence" value="ECO:0007669"/>
    <property type="project" value="Ensembl"/>
</dbReference>
<dbReference type="GO" id="GO:0004890">
    <property type="term" value="F:GABA-A receptor activity"/>
    <property type="evidence" value="ECO:0000314"/>
    <property type="project" value="UniProtKB"/>
</dbReference>
<dbReference type="GO" id="GO:0022851">
    <property type="term" value="F:GABA-gated chloride ion channel activity"/>
    <property type="evidence" value="ECO:0000314"/>
    <property type="project" value="UniProtKB"/>
</dbReference>
<dbReference type="GO" id="GO:0015276">
    <property type="term" value="F:ligand-gated monoatomic ion channel activity"/>
    <property type="evidence" value="ECO:0000250"/>
    <property type="project" value="UniProtKB"/>
</dbReference>
<dbReference type="GO" id="GO:0099507">
    <property type="term" value="F:ligand-gated monoatomic ion channel activity involved in regulation of presynaptic membrane potential"/>
    <property type="evidence" value="ECO:0000314"/>
    <property type="project" value="SynGO"/>
</dbReference>
<dbReference type="GO" id="GO:1904315">
    <property type="term" value="F:transmitter-gated monoatomic ion channel activity involved in regulation of postsynaptic membrane potential"/>
    <property type="evidence" value="ECO:0007669"/>
    <property type="project" value="Ensembl"/>
</dbReference>
<dbReference type="GO" id="GO:0071420">
    <property type="term" value="P:cellular response to histamine"/>
    <property type="evidence" value="ECO:0000250"/>
    <property type="project" value="UniProtKB"/>
</dbReference>
<dbReference type="GO" id="GO:0021954">
    <property type="term" value="P:central nervous system neuron development"/>
    <property type="evidence" value="ECO:0007669"/>
    <property type="project" value="Ensembl"/>
</dbReference>
<dbReference type="GO" id="GO:1902476">
    <property type="term" value="P:chloride transmembrane transport"/>
    <property type="evidence" value="ECO:0000314"/>
    <property type="project" value="GO_Central"/>
</dbReference>
<dbReference type="GO" id="GO:0007214">
    <property type="term" value="P:gamma-aminobutyric acid signaling pathway"/>
    <property type="evidence" value="ECO:0000315"/>
    <property type="project" value="UniProtKB"/>
</dbReference>
<dbReference type="GO" id="GO:0006811">
    <property type="term" value="P:monoatomic ion transport"/>
    <property type="evidence" value="ECO:0000250"/>
    <property type="project" value="UniProtKB"/>
</dbReference>
<dbReference type="GO" id="GO:0042698">
    <property type="term" value="P:ovulation cycle"/>
    <property type="evidence" value="ECO:0007669"/>
    <property type="project" value="Ensembl"/>
</dbReference>
<dbReference type="GO" id="GO:0032570">
    <property type="term" value="P:response to progesterone"/>
    <property type="evidence" value="ECO:0007669"/>
    <property type="project" value="Ensembl"/>
</dbReference>
<dbReference type="GO" id="GO:0009636">
    <property type="term" value="P:response to toxic substance"/>
    <property type="evidence" value="ECO:0007669"/>
    <property type="project" value="Ensembl"/>
</dbReference>
<dbReference type="GO" id="GO:0007165">
    <property type="term" value="P:signal transduction"/>
    <property type="evidence" value="ECO:0000304"/>
    <property type="project" value="ProtInc"/>
</dbReference>
<dbReference type="CDD" id="cd18999">
    <property type="entry name" value="LGIC_ECD_GABAAR_B"/>
    <property type="match status" value="1"/>
</dbReference>
<dbReference type="CDD" id="cd19053">
    <property type="entry name" value="LGIC_TM_GABAAR_beta"/>
    <property type="match status" value="1"/>
</dbReference>
<dbReference type="FunFam" id="2.70.170.10:FF:000004">
    <property type="entry name" value="Gamma-aminobutyric acid receptor subunit beta-2 isoform A"/>
    <property type="match status" value="1"/>
</dbReference>
<dbReference type="FunFam" id="1.20.58.390:FF:000067">
    <property type="entry name" value="Glycine receptor subunit alpha-2"/>
    <property type="match status" value="1"/>
</dbReference>
<dbReference type="Gene3D" id="2.70.170.10">
    <property type="entry name" value="Neurotransmitter-gated ion-channel ligand-binding domain"/>
    <property type="match status" value="1"/>
</dbReference>
<dbReference type="Gene3D" id="1.20.58.390">
    <property type="entry name" value="Neurotransmitter-gated ion-channel transmembrane domain"/>
    <property type="match status" value="1"/>
</dbReference>
<dbReference type="InterPro" id="IPR006028">
    <property type="entry name" value="GABAA/Glycine_rcpt"/>
</dbReference>
<dbReference type="InterPro" id="IPR002289">
    <property type="entry name" value="GABAAb_rcpt"/>
</dbReference>
<dbReference type="InterPro" id="IPR006202">
    <property type="entry name" value="Neur_chan_lig-bd"/>
</dbReference>
<dbReference type="InterPro" id="IPR036734">
    <property type="entry name" value="Neur_chan_lig-bd_sf"/>
</dbReference>
<dbReference type="InterPro" id="IPR006201">
    <property type="entry name" value="Neur_channel"/>
</dbReference>
<dbReference type="InterPro" id="IPR036719">
    <property type="entry name" value="Neuro-gated_channel_TM_sf"/>
</dbReference>
<dbReference type="InterPro" id="IPR038050">
    <property type="entry name" value="Neuro_actylchol_rec"/>
</dbReference>
<dbReference type="InterPro" id="IPR006029">
    <property type="entry name" value="Neurotrans-gated_channel_TM"/>
</dbReference>
<dbReference type="InterPro" id="IPR018000">
    <property type="entry name" value="Neurotransmitter_ion_chnl_CS"/>
</dbReference>
<dbReference type="NCBIfam" id="TIGR00860">
    <property type="entry name" value="LIC"/>
    <property type="match status" value="1"/>
</dbReference>
<dbReference type="PANTHER" id="PTHR18945">
    <property type="entry name" value="NEUROTRANSMITTER GATED ION CHANNEL"/>
    <property type="match status" value="1"/>
</dbReference>
<dbReference type="Pfam" id="PF02931">
    <property type="entry name" value="Neur_chan_LBD"/>
    <property type="match status" value="1"/>
</dbReference>
<dbReference type="Pfam" id="PF02932">
    <property type="entry name" value="Neur_chan_memb"/>
    <property type="match status" value="1"/>
</dbReference>
<dbReference type="PRINTS" id="PR01160">
    <property type="entry name" value="GABAARBETA"/>
</dbReference>
<dbReference type="PRINTS" id="PR00253">
    <property type="entry name" value="GABAARECEPTR"/>
</dbReference>
<dbReference type="PRINTS" id="PR00252">
    <property type="entry name" value="NRIONCHANNEL"/>
</dbReference>
<dbReference type="SUPFAM" id="SSF90112">
    <property type="entry name" value="Neurotransmitter-gated ion-channel transmembrane pore"/>
    <property type="match status" value="1"/>
</dbReference>
<dbReference type="SUPFAM" id="SSF63712">
    <property type="entry name" value="Nicotinic receptor ligand binding domain-like"/>
    <property type="match status" value="1"/>
</dbReference>
<dbReference type="PROSITE" id="PS00236">
    <property type="entry name" value="NEUROTR_ION_CHANNEL"/>
    <property type="match status" value="1"/>
</dbReference>
<evidence type="ECO:0000250" key="1">
    <source>
        <dbReference type="UniProtKB" id="P08220"/>
    </source>
</evidence>
<evidence type="ECO:0000250" key="2">
    <source>
        <dbReference type="UniProtKB" id="P14867"/>
    </source>
</evidence>
<evidence type="ECO:0000250" key="3">
    <source>
        <dbReference type="UniProtKB" id="P15431"/>
    </source>
</evidence>
<evidence type="ECO:0000250" key="4">
    <source>
        <dbReference type="UniProtKB" id="P28472"/>
    </source>
</evidence>
<evidence type="ECO:0000250" key="5">
    <source>
        <dbReference type="UniProtKB" id="P50571"/>
    </source>
</evidence>
<evidence type="ECO:0000250" key="6">
    <source>
        <dbReference type="UniProtKB" id="P63138"/>
    </source>
</evidence>
<evidence type="ECO:0000255" key="7"/>
<evidence type="ECO:0000269" key="8">
    <source>
    </source>
</evidence>
<evidence type="ECO:0000269" key="9">
    <source>
    </source>
</evidence>
<evidence type="ECO:0000269" key="10">
    <source>
    </source>
</evidence>
<evidence type="ECO:0000269" key="11">
    <source>
    </source>
</evidence>
<evidence type="ECO:0000269" key="12">
    <source>
    </source>
</evidence>
<evidence type="ECO:0000269" key="13">
    <source>
    </source>
</evidence>
<evidence type="ECO:0000269" key="14">
    <source>
    </source>
</evidence>
<evidence type="ECO:0000303" key="15">
    <source>
    </source>
</evidence>
<evidence type="ECO:0000305" key="16"/>
<evidence type="ECO:0000312" key="17">
    <source>
        <dbReference type="HGNC" id="HGNC:4081"/>
    </source>
</evidence>
<feature type="signal peptide" evidence="7">
    <location>
        <begin position="1"/>
        <end position="25"/>
    </location>
</feature>
<feature type="chain" id="PRO_0000000456" description="Gamma-aminobutyric acid receptor subunit beta-1">
    <location>
        <begin position="26"/>
        <end position="474"/>
    </location>
</feature>
<feature type="topological domain" description="Extracellular" evidence="16">
    <location>
        <begin position="26"/>
        <end position="245"/>
    </location>
</feature>
<feature type="transmembrane region" description="Helical" evidence="16">
    <location>
        <begin position="246"/>
        <end position="267"/>
    </location>
</feature>
<feature type="transmembrane region" description="Helical" evidence="16">
    <location>
        <begin position="271"/>
        <end position="293"/>
    </location>
</feature>
<feature type="transmembrane region" description="Helical" evidence="16">
    <location>
        <begin position="305"/>
        <end position="327"/>
    </location>
</feature>
<feature type="topological domain" description="Cytoplasmic" evidence="16">
    <location>
        <begin position="328"/>
        <end position="451"/>
    </location>
</feature>
<feature type="transmembrane region" description="Helical" evidence="16">
    <location>
        <begin position="452"/>
        <end position="473"/>
    </location>
</feature>
<feature type="binding site" description="in chain B" evidence="4">
    <location>
        <position position="122"/>
    </location>
    <ligand>
        <name>histamine</name>
        <dbReference type="ChEBI" id="CHEBI:58432"/>
        <note>ligand shared between two neighboring beta subunits</note>
    </ligand>
</feature>
<feature type="binding site" description="in chain B" evidence="4">
    <location>
        <begin position="181"/>
        <end position="182"/>
    </location>
    <ligand>
        <name>histamine</name>
        <dbReference type="ChEBI" id="CHEBI:58432"/>
        <note>ligand shared between two neighboring beta subunits</note>
    </ligand>
</feature>
<feature type="binding site" description="in chain A" evidence="3">
    <location>
        <position position="182"/>
    </location>
    <ligand>
        <name>4-aminobutanoate</name>
        <dbReference type="ChEBI" id="CHEBI:59888"/>
        <note>ligand shared with the neighboring alpha subunit</note>
    </ligand>
</feature>
<feature type="binding site" description="in chain A" evidence="3">
    <location>
        <position position="227"/>
    </location>
    <ligand>
        <name>4-aminobutanoate</name>
        <dbReference type="ChEBI" id="CHEBI:59888"/>
        <note>ligand shared with the neighboring alpha subunit</note>
    </ligand>
</feature>
<feature type="binding site" description="in chain B" evidence="4">
    <location>
        <position position="227"/>
    </location>
    <ligand>
        <name>histamine</name>
        <dbReference type="ChEBI" id="CHEBI:58432"/>
        <note>ligand shared between two neighboring beta subunits</note>
    </ligand>
</feature>
<feature type="glycosylation site" description="N-linked (GlcNAc...) asparagine" evidence="7">
    <location>
        <position position="105"/>
    </location>
</feature>
<feature type="glycosylation site" description="N-linked (GlcNAc...) asparagine" evidence="7">
    <location>
        <position position="174"/>
    </location>
</feature>
<feature type="disulfide bond" evidence="3">
    <location>
        <begin position="161"/>
        <end position="175"/>
    </location>
</feature>
<feature type="splice variant" id="VSP_055900" description="In isoform 2." evidence="15">
    <original>PPVDVGMRIDVASIDMVSEVNMDYTLTMY</original>
    <variation>LYTHHVFPAVLERQKAFLFWNPTEPHPRQ</variation>
    <location>
        <begin position="59"/>
        <end position="87"/>
    </location>
</feature>
<feature type="splice variant" id="VSP_055901" description="In isoform 2." evidence="15">
    <location>
        <begin position="88"/>
        <end position="474"/>
    </location>
</feature>
<feature type="sequence variant" id="VAR_077104" description="In DEE45; no effect on localization to the plasma membrane; increased GABA-gated chloride ion channel activity; increased single channel burst duration; dbSNP:rs886039817." evidence="11 12">
    <original>F</original>
    <variation>S</variation>
    <location>
        <position position="246"/>
    </location>
</feature>
<feature type="sequence variant" id="VAR_077105" description="In DEE45; dbSNP:rs886039818." evidence="13">
    <original>T</original>
    <variation>I</variation>
    <location>
        <position position="287"/>
    </location>
</feature>
<feature type="sequence variant" id="VAR_000302" description="Found in 1.1% of population and in some schizophrenic patients; dbSNP:rs41311286." evidence="14">
    <original>H</original>
    <variation>Q</variation>
    <location>
        <position position="421"/>
    </location>
</feature>
<feature type="sequence variant" id="VAR_035441" description="In dbSNP:rs17852014." evidence="9">
    <original>I</original>
    <variation>N</variation>
    <location>
        <position position="429"/>
    </location>
</feature>
<feature type="sequence conflict" description="In Ref. 1; CAA32875." evidence="16" ref="1">
    <original>S</original>
    <variation>P</variation>
    <location>
        <position position="35"/>
    </location>
</feature>
<feature type="sequence conflict" description="In Ref. 7; AAH22449." evidence="16" ref="7">
    <original>W</original>
    <variation>C</variation>
    <location>
        <position position="117"/>
    </location>
</feature>
<sequence>MWTVQNRESLGLLSFPVMITMVCCAHSTNEPSNMSYVKETVDRLLKGYDIRLRPDFGGPPVDVGMRIDVASIDMVSEVNMDYTLTMYFQQSWKDKRLSYSGIPLNLTLDNRVADQLWVPDTYFLNDKKSFVHGVTVKNRMIRLHPDGTVLYGLRITTTAACMMDLRRYPLDEQNCTLEIESYGYTTDDIEFYWNGGEGAVTGVNKIELPQFSIVDYKMVSKKVEFTTGAYPRLSLSFRLKRNIGYFILQTYMPSTLITILSWVSFWINYDASAARVALGITTVLTMTTISTHLRETLPKIPYVKAIDIYLMGCFVFVFLALLEYAFVNYIFFGKGPQKKGASKQDQSANEKNKLEMNKVQVDAHGNILLSTLEIRNETSGSEVLTSVSDPKATMYSYDSASIQYRKPLSSREAYGRALDRHGVPSKGRIRRRASQLKVKIPDLTDVNSIDKWSRMFFPITFSLFNVVYWLYYVH</sequence>
<organism>
    <name type="scientific">Homo sapiens</name>
    <name type="common">Human</name>
    <dbReference type="NCBI Taxonomy" id="9606"/>
    <lineage>
        <taxon>Eukaryota</taxon>
        <taxon>Metazoa</taxon>
        <taxon>Chordata</taxon>
        <taxon>Craniata</taxon>
        <taxon>Vertebrata</taxon>
        <taxon>Euteleostomi</taxon>
        <taxon>Mammalia</taxon>
        <taxon>Eutheria</taxon>
        <taxon>Euarchontoglires</taxon>
        <taxon>Primates</taxon>
        <taxon>Haplorrhini</taxon>
        <taxon>Catarrhini</taxon>
        <taxon>Hominidae</taxon>
        <taxon>Homo</taxon>
    </lineage>
</organism>
<protein>
    <recommendedName>
        <fullName>Gamma-aminobutyric acid receptor subunit beta-1</fullName>
    </recommendedName>
    <alternativeName>
        <fullName evidence="3">GABA(A) receptor subunit beta-1</fullName>
        <shortName evidence="2">GABAAR subunit beta-1</shortName>
    </alternativeName>
</protein>
<gene>
    <name evidence="17" type="primary">GABRB1</name>
</gene>
<name>GBRB1_HUMAN</name>
<reference key="1">
    <citation type="journal article" date="1989" name="FEBS Lett.">
        <title>Sequence and expression of human GABAA receptor alpha 1 and beta 1 subunits.</title>
        <authorList>
            <person name="Schofield P.R."/>
            <person name="Pritchett D.B."/>
            <person name="Sontheimer H."/>
            <person name="Kettenmann H."/>
            <person name="Seeburg P.H."/>
        </authorList>
    </citation>
    <scope>NUCLEOTIDE SEQUENCE [MRNA] (ISOFORM 1)</scope>
</reference>
<reference key="2">
    <citation type="journal article" date="1991" name="Genomics">
        <title>Isolation, characterization, and localization of human genomic DNA encoding the beta 1 subunit of the GABAA receptor (GABRB1).</title>
        <authorList>
            <person name="Kirkness E.F."/>
            <person name="Kusiak J.W."/>
            <person name="Fleming J.T."/>
            <person name="Menninger J."/>
            <person name="Gocayne J.D."/>
            <person name="Ward D.C."/>
            <person name="Venter J.C."/>
        </authorList>
    </citation>
    <scope>NUCLEOTIDE SEQUENCE [GENOMIC DNA]</scope>
</reference>
<reference key="3">
    <citation type="journal article" date="2014" name="Nat. Commun.">
        <title>Protein interaction network of alternatively spliced isoforms from brain links genetic risk factors for autism.</title>
        <authorList>
            <person name="Corominas R."/>
            <person name="Yang X."/>
            <person name="Lin G.N."/>
            <person name="Kang S."/>
            <person name="Shen Y."/>
            <person name="Ghamsari L."/>
            <person name="Broly M."/>
            <person name="Rodriguez M."/>
            <person name="Tam S."/>
            <person name="Wanamaker S.A."/>
            <person name="Fan C."/>
            <person name="Yi S."/>
            <person name="Tasan M."/>
            <person name="Lemmens I."/>
            <person name="Kuang X."/>
            <person name="Zhao N."/>
            <person name="Malhotra D."/>
            <person name="Michaelson J.J."/>
            <person name="Vacic V."/>
            <person name="Calderwood M.A."/>
            <person name="Roth F.P."/>
            <person name="Tavernier J."/>
            <person name="Horvath S."/>
            <person name="Salehi-Ashtiani K."/>
            <person name="Korkin D."/>
            <person name="Sebat J."/>
            <person name="Hill D.E."/>
            <person name="Hao T."/>
            <person name="Vidal M."/>
            <person name="Iakoucheva L.M."/>
        </authorList>
    </citation>
    <scope>NUCLEOTIDE SEQUENCE [MRNA] (ISOFORM 2)</scope>
    <source>
        <tissue>Fetal brain</tissue>
    </source>
</reference>
<reference key="4">
    <citation type="journal article" date="2004" name="Nat. Genet.">
        <title>Complete sequencing and characterization of 21,243 full-length human cDNAs.</title>
        <authorList>
            <person name="Ota T."/>
            <person name="Suzuki Y."/>
            <person name="Nishikawa T."/>
            <person name="Otsuki T."/>
            <person name="Sugiyama T."/>
            <person name="Irie R."/>
            <person name="Wakamatsu A."/>
            <person name="Hayashi K."/>
            <person name="Sato H."/>
            <person name="Nagai K."/>
            <person name="Kimura K."/>
            <person name="Makita H."/>
            <person name="Sekine M."/>
            <person name="Obayashi M."/>
            <person name="Nishi T."/>
            <person name="Shibahara T."/>
            <person name="Tanaka T."/>
            <person name="Ishii S."/>
            <person name="Yamamoto J."/>
            <person name="Saito K."/>
            <person name="Kawai Y."/>
            <person name="Isono Y."/>
            <person name="Nakamura Y."/>
            <person name="Nagahari K."/>
            <person name="Murakami K."/>
            <person name="Yasuda T."/>
            <person name="Iwayanagi T."/>
            <person name="Wagatsuma M."/>
            <person name="Shiratori A."/>
            <person name="Sudo H."/>
            <person name="Hosoiri T."/>
            <person name="Kaku Y."/>
            <person name="Kodaira H."/>
            <person name="Kondo H."/>
            <person name="Sugawara M."/>
            <person name="Takahashi M."/>
            <person name="Kanda K."/>
            <person name="Yokoi T."/>
            <person name="Furuya T."/>
            <person name="Kikkawa E."/>
            <person name="Omura Y."/>
            <person name="Abe K."/>
            <person name="Kamihara K."/>
            <person name="Katsuta N."/>
            <person name="Sato K."/>
            <person name="Tanikawa M."/>
            <person name="Yamazaki M."/>
            <person name="Ninomiya K."/>
            <person name="Ishibashi T."/>
            <person name="Yamashita H."/>
            <person name="Murakawa K."/>
            <person name="Fujimori K."/>
            <person name="Tanai H."/>
            <person name="Kimata M."/>
            <person name="Watanabe M."/>
            <person name="Hiraoka S."/>
            <person name="Chiba Y."/>
            <person name="Ishida S."/>
            <person name="Ono Y."/>
            <person name="Takiguchi S."/>
            <person name="Watanabe S."/>
            <person name="Yosida M."/>
            <person name="Hotuta T."/>
            <person name="Kusano J."/>
            <person name="Kanehori K."/>
            <person name="Takahashi-Fujii A."/>
            <person name="Hara H."/>
            <person name="Tanase T.-O."/>
            <person name="Nomura Y."/>
            <person name="Togiya S."/>
            <person name="Komai F."/>
            <person name="Hara R."/>
            <person name="Takeuchi K."/>
            <person name="Arita M."/>
            <person name="Imose N."/>
            <person name="Musashino K."/>
            <person name="Yuuki H."/>
            <person name="Oshima A."/>
            <person name="Sasaki N."/>
            <person name="Aotsuka S."/>
            <person name="Yoshikawa Y."/>
            <person name="Matsunawa H."/>
            <person name="Ichihara T."/>
            <person name="Shiohata N."/>
            <person name="Sano S."/>
            <person name="Moriya S."/>
            <person name="Momiyama H."/>
            <person name="Satoh N."/>
            <person name="Takami S."/>
            <person name="Terashima Y."/>
            <person name="Suzuki O."/>
            <person name="Nakagawa S."/>
            <person name="Senoh A."/>
            <person name="Mizoguchi H."/>
            <person name="Goto Y."/>
            <person name="Shimizu F."/>
            <person name="Wakebe H."/>
            <person name="Hishigaki H."/>
            <person name="Watanabe T."/>
            <person name="Sugiyama A."/>
            <person name="Takemoto M."/>
            <person name="Kawakami B."/>
            <person name="Yamazaki M."/>
            <person name="Watanabe K."/>
            <person name="Kumagai A."/>
            <person name="Itakura S."/>
            <person name="Fukuzumi Y."/>
            <person name="Fujimori Y."/>
            <person name="Komiyama M."/>
            <person name="Tashiro H."/>
            <person name="Tanigami A."/>
            <person name="Fujiwara T."/>
            <person name="Ono T."/>
            <person name="Yamada K."/>
            <person name="Fujii Y."/>
            <person name="Ozaki K."/>
            <person name="Hirao M."/>
            <person name="Ohmori Y."/>
            <person name="Kawabata A."/>
            <person name="Hikiji T."/>
            <person name="Kobatake N."/>
            <person name="Inagaki H."/>
            <person name="Ikema Y."/>
            <person name="Okamoto S."/>
            <person name="Okitani R."/>
            <person name="Kawakami T."/>
            <person name="Noguchi S."/>
            <person name="Itoh T."/>
            <person name="Shigeta K."/>
            <person name="Senba T."/>
            <person name="Matsumura K."/>
            <person name="Nakajima Y."/>
            <person name="Mizuno T."/>
            <person name="Morinaga M."/>
            <person name="Sasaki M."/>
            <person name="Togashi T."/>
            <person name="Oyama M."/>
            <person name="Hata H."/>
            <person name="Watanabe M."/>
            <person name="Komatsu T."/>
            <person name="Mizushima-Sugano J."/>
            <person name="Satoh T."/>
            <person name="Shirai Y."/>
            <person name="Takahashi Y."/>
            <person name="Nakagawa K."/>
            <person name="Okumura K."/>
            <person name="Nagase T."/>
            <person name="Nomura N."/>
            <person name="Kikuchi H."/>
            <person name="Masuho Y."/>
            <person name="Yamashita R."/>
            <person name="Nakai K."/>
            <person name="Yada T."/>
            <person name="Nakamura Y."/>
            <person name="Ohara O."/>
            <person name="Isogai T."/>
            <person name="Sugano S."/>
        </authorList>
    </citation>
    <scope>NUCLEOTIDE SEQUENCE [LARGE SCALE MRNA] (ISOFORM 1)</scope>
    <source>
        <tissue>Brain</tissue>
    </source>
</reference>
<reference key="5">
    <citation type="journal article" date="2005" name="Nature">
        <title>Generation and annotation of the DNA sequences of human chromosomes 2 and 4.</title>
        <authorList>
            <person name="Hillier L.W."/>
            <person name="Graves T.A."/>
            <person name="Fulton R.S."/>
            <person name="Fulton L.A."/>
            <person name="Pepin K.H."/>
            <person name="Minx P."/>
            <person name="Wagner-McPherson C."/>
            <person name="Layman D."/>
            <person name="Wylie K."/>
            <person name="Sekhon M."/>
            <person name="Becker M.C."/>
            <person name="Fewell G.A."/>
            <person name="Delehaunty K.D."/>
            <person name="Miner T.L."/>
            <person name="Nash W.E."/>
            <person name="Kremitzki C."/>
            <person name="Oddy L."/>
            <person name="Du H."/>
            <person name="Sun H."/>
            <person name="Bradshaw-Cordum H."/>
            <person name="Ali J."/>
            <person name="Carter J."/>
            <person name="Cordes M."/>
            <person name="Harris A."/>
            <person name="Isak A."/>
            <person name="van Brunt A."/>
            <person name="Nguyen C."/>
            <person name="Du F."/>
            <person name="Courtney L."/>
            <person name="Kalicki J."/>
            <person name="Ozersky P."/>
            <person name="Abbott S."/>
            <person name="Armstrong J."/>
            <person name="Belter E.A."/>
            <person name="Caruso L."/>
            <person name="Cedroni M."/>
            <person name="Cotton M."/>
            <person name="Davidson T."/>
            <person name="Desai A."/>
            <person name="Elliott G."/>
            <person name="Erb T."/>
            <person name="Fronick C."/>
            <person name="Gaige T."/>
            <person name="Haakenson W."/>
            <person name="Haglund K."/>
            <person name="Holmes A."/>
            <person name="Harkins R."/>
            <person name="Kim K."/>
            <person name="Kruchowski S.S."/>
            <person name="Strong C.M."/>
            <person name="Grewal N."/>
            <person name="Goyea E."/>
            <person name="Hou S."/>
            <person name="Levy A."/>
            <person name="Martinka S."/>
            <person name="Mead K."/>
            <person name="McLellan M.D."/>
            <person name="Meyer R."/>
            <person name="Randall-Maher J."/>
            <person name="Tomlinson C."/>
            <person name="Dauphin-Kohlberg S."/>
            <person name="Kozlowicz-Reilly A."/>
            <person name="Shah N."/>
            <person name="Swearengen-Shahid S."/>
            <person name="Snider J."/>
            <person name="Strong J.T."/>
            <person name="Thompson J."/>
            <person name="Yoakum M."/>
            <person name="Leonard S."/>
            <person name="Pearman C."/>
            <person name="Trani L."/>
            <person name="Radionenko M."/>
            <person name="Waligorski J.E."/>
            <person name="Wang C."/>
            <person name="Rock S.M."/>
            <person name="Tin-Wollam A.-M."/>
            <person name="Maupin R."/>
            <person name="Latreille P."/>
            <person name="Wendl M.C."/>
            <person name="Yang S.-P."/>
            <person name="Pohl C."/>
            <person name="Wallis J.W."/>
            <person name="Spieth J."/>
            <person name="Bieri T.A."/>
            <person name="Berkowicz N."/>
            <person name="Nelson J.O."/>
            <person name="Osborne J."/>
            <person name="Ding L."/>
            <person name="Meyer R."/>
            <person name="Sabo A."/>
            <person name="Shotland Y."/>
            <person name="Sinha P."/>
            <person name="Wohldmann P.E."/>
            <person name="Cook L.L."/>
            <person name="Hickenbotham M.T."/>
            <person name="Eldred J."/>
            <person name="Williams D."/>
            <person name="Jones T.A."/>
            <person name="She X."/>
            <person name="Ciccarelli F.D."/>
            <person name="Izaurralde E."/>
            <person name="Taylor J."/>
            <person name="Schmutz J."/>
            <person name="Myers R.M."/>
            <person name="Cox D.R."/>
            <person name="Huang X."/>
            <person name="McPherson J.D."/>
            <person name="Mardis E.R."/>
            <person name="Clifton S.W."/>
            <person name="Warren W.C."/>
            <person name="Chinwalla A.T."/>
            <person name="Eddy S.R."/>
            <person name="Marra M.A."/>
            <person name="Ovcharenko I."/>
            <person name="Furey T.S."/>
            <person name="Miller W."/>
            <person name="Eichler E.E."/>
            <person name="Bork P."/>
            <person name="Suyama M."/>
            <person name="Torrents D."/>
            <person name="Waterston R.H."/>
            <person name="Wilson R.K."/>
        </authorList>
    </citation>
    <scope>NUCLEOTIDE SEQUENCE [LARGE SCALE GENOMIC DNA]</scope>
</reference>
<reference key="6">
    <citation type="submission" date="2005-07" db="EMBL/GenBank/DDBJ databases">
        <authorList>
            <person name="Mural R.J."/>
            <person name="Istrail S."/>
            <person name="Sutton G.G."/>
            <person name="Florea L."/>
            <person name="Halpern A.L."/>
            <person name="Mobarry C.M."/>
            <person name="Lippert R."/>
            <person name="Walenz B."/>
            <person name="Shatkay H."/>
            <person name="Dew I."/>
            <person name="Miller J.R."/>
            <person name="Flanigan M.J."/>
            <person name="Edwards N.J."/>
            <person name="Bolanos R."/>
            <person name="Fasulo D."/>
            <person name="Halldorsson B.V."/>
            <person name="Hannenhalli S."/>
            <person name="Turner R."/>
            <person name="Yooseph S."/>
            <person name="Lu F."/>
            <person name="Nusskern D.R."/>
            <person name="Shue B.C."/>
            <person name="Zheng X.H."/>
            <person name="Zhong F."/>
            <person name="Delcher A.L."/>
            <person name="Huson D.H."/>
            <person name="Kravitz S.A."/>
            <person name="Mouchard L."/>
            <person name="Reinert K."/>
            <person name="Remington K.A."/>
            <person name="Clark A.G."/>
            <person name="Waterman M.S."/>
            <person name="Eichler E.E."/>
            <person name="Adams M.D."/>
            <person name="Hunkapiller M.W."/>
            <person name="Myers E.W."/>
            <person name="Venter J.C."/>
        </authorList>
    </citation>
    <scope>NUCLEOTIDE SEQUENCE [LARGE SCALE GENOMIC DNA]</scope>
</reference>
<reference key="7">
    <citation type="journal article" date="2004" name="Genome Res.">
        <title>The status, quality, and expansion of the NIH full-length cDNA project: the Mammalian Gene Collection (MGC).</title>
        <authorList>
            <consortium name="The MGC Project Team"/>
        </authorList>
    </citation>
    <scope>NUCLEOTIDE SEQUENCE [LARGE SCALE MRNA] (ISOFORM 1)</scope>
    <scope>VARIANT ASN-429</scope>
    <source>
        <tissue>Brain</tissue>
    </source>
</reference>
<reference key="8">
    <citation type="journal article" date="1990" name="Mol. Pharmacol.">
        <title>Differential expression of gamma-aminobutyric acidA receptor subunits.</title>
        <authorList>
            <person name="Garrett K.M."/>
            <person name="Saito N."/>
            <person name="Duman R.S."/>
            <person name="Abel M.S."/>
            <person name="Ashton R.A."/>
            <person name="Fujimori S."/>
            <person name="Beer B."/>
            <person name="Tallman J.F."/>
            <person name="Vitek M.P."/>
            <person name="Blume A.J."/>
        </authorList>
    </citation>
    <scope>NUCLEOTIDE SEQUENCE [MRNA] OF 19-474 (ISOFORM 1)</scope>
</reference>
<reference key="9">
    <citation type="journal article" date="1994" name="Am. J. Med. Genet.">
        <title>Search for mutations in the beta 1 GABAA receptor subunit gene in patients with schizophrenia.</title>
        <authorList>
            <person name="Coon H."/>
            <person name="Sobell J."/>
            <person name="Heston L."/>
            <person name="Sommer S."/>
            <person name="Hoff M."/>
            <person name="Holik J."/>
            <person name="Umar F."/>
            <person name="Robertson M."/>
            <person name="Reimherr F."/>
            <person name="Wender P."/>
        </authorList>
    </citation>
    <scope>NUCLEOTIDE SEQUENCE [MRNA] OF 404-434 (ISOFORM 1)</scope>
    <scope>VARIANT GLN-421</scope>
</reference>
<reference key="10">
    <citation type="journal article" date="1999" name="Proc. Natl. Acad. Sci. U.S.A.">
        <title>Theta, a novel gamma-aminobutyric acid type A receptor subunit.</title>
        <authorList>
            <person name="Bonnert T.P."/>
            <person name="McKernan R.M."/>
            <person name="Farrar S."/>
            <person name="le Bourdelles B."/>
            <person name="Heavens R.P."/>
            <person name="Smith D.W."/>
            <person name="Hewson L."/>
            <person name="Rigby M.R."/>
            <person name="Sirinathsinghji D.J.S."/>
            <person name="Brown N."/>
            <person name="Wafford K.A."/>
            <person name="Whiting P.J."/>
        </authorList>
    </citation>
    <scope>FUNCTION</scope>
    <scope>TRANSPORTER ACTIVITY</scope>
    <scope>INTERACTION WITH GABRA2; GABRG1 AND GABRQ</scope>
</reference>
<reference key="11">
    <citation type="journal article" date="2006" name="BMC Pharmacol.">
        <title>Impact of epsilon and theta subunits on pharmacological properties of alpha3beta1 GABAA receptors expressed in Xenopus oocytes.</title>
        <authorList>
            <person name="Ranna M."/>
            <person name="Sinkkonen S.T."/>
            <person name="Moeykkynen T."/>
            <person name="Uusi-Oukari M."/>
            <person name="Korpi E.R."/>
        </authorList>
    </citation>
    <scope>FUNCTION</scope>
    <scope>TRANSPORTER ACTIVITY</scope>
    <scope>ACTIVITY REGULATION</scope>
    <scope>INTERACTION WITH GABRA3; GABRBT AND GABRE</scope>
</reference>
<reference key="12">
    <citation type="journal article" date="2013" name="Nature">
        <title>De novo mutations in epileptic encephalopathies.</title>
        <authorList>
            <consortium name="Epi4K Consortium"/>
            <consortium name="Epilepsy Phenome/Genome Project"/>
            <person name="Allen A.S."/>
            <person name="Berkovic S.F."/>
            <person name="Cossette P."/>
            <person name="Delanty N."/>
            <person name="Dlugos D."/>
            <person name="Eichler E.E."/>
            <person name="Epstein M.P."/>
            <person name="Glauser T."/>
            <person name="Goldstein D.B."/>
            <person name="Han Y."/>
            <person name="Heinzen E.L."/>
            <person name="Hitomi Y."/>
            <person name="Howell K.B."/>
            <person name="Johnson M.R."/>
            <person name="Kuzniecky R."/>
            <person name="Lowenstein D.H."/>
            <person name="Lu Y.F."/>
            <person name="Madou M.R."/>
            <person name="Marson A.G."/>
            <person name="Mefford H.C."/>
            <person name="Esmaeeli Nieh S."/>
            <person name="O'Brien T.J."/>
            <person name="Ottman R."/>
            <person name="Petrovski S."/>
            <person name="Poduri A."/>
            <person name="Ruzzo E.K."/>
            <person name="Scheffer I.E."/>
            <person name="Sherr E.H."/>
            <person name="Yuskaitis C.J."/>
            <person name="Abou-Khalil B."/>
            <person name="Alldredge B.K."/>
            <person name="Bautista J.F."/>
            <person name="Berkovic S.F."/>
            <person name="Boro A."/>
            <person name="Cascino G.D."/>
            <person name="Consalvo D."/>
            <person name="Crumrine P."/>
            <person name="Devinsky O."/>
            <person name="Dlugos D."/>
            <person name="Epstein M.P."/>
            <person name="Fiol M."/>
            <person name="Fountain N.B."/>
            <person name="French J."/>
            <person name="Friedman D."/>
            <person name="Geller E.B."/>
            <person name="Glauser T."/>
            <person name="Glynn S."/>
            <person name="Haut S.R."/>
            <person name="Hayward J."/>
            <person name="Helmers S.L."/>
            <person name="Joshi S."/>
            <person name="Kanner A."/>
            <person name="Kirsch H.E."/>
            <person name="Knowlton R.C."/>
            <person name="Kossoff E.H."/>
            <person name="Kuperman R."/>
            <person name="Kuzniecky R."/>
            <person name="Lowenstein D.H."/>
            <person name="McGuire S.M."/>
            <person name="Motika P.V."/>
            <person name="Novotny E.J."/>
            <person name="Ottman R."/>
            <person name="Paolicchi J.M."/>
            <person name="Parent J.M."/>
            <person name="Park K."/>
            <person name="Poduri A."/>
            <person name="Scheffer I.E."/>
            <person name="Shellhaas R.A."/>
            <person name="Sherr E.H."/>
            <person name="Shih J.J."/>
            <person name="Singh R."/>
            <person name="Sirven J."/>
            <person name="Smith M.C."/>
            <person name="Sullivan J."/>
            <person name="Lin Thio L."/>
            <person name="Venkat A."/>
            <person name="Vining E.P."/>
            <person name="Von Allmen G.K."/>
            <person name="Weisenberg J.L."/>
            <person name="Widdess-Walsh P."/>
            <person name="Winawer M.R."/>
        </authorList>
    </citation>
    <scope>INVOLVEMENT IN DEE45</scope>
    <scope>VARIANT DEE45 SER-246</scope>
</reference>
<reference key="13">
    <citation type="journal article" date="2016" name="Ann. Neurol.">
        <title>A second patient with a de novo GABRB1 mutation and epileptic encephalopathy.</title>
        <authorList>
            <person name="Lien E."/>
            <person name="Vaatevik A.K."/>
            <person name="Oestern R."/>
            <person name="Haukanes B.I."/>
            <person name="Houge G."/>
        </authorList>
    </citation>
    <scope>VARIANT DEE45 ILE-287</scope>
</reference>
<reference key="14">
    <citation type="journal article" date="2016" name="Ann. Neurol.">
        <title>Epileptic encephalopathy de novo GABRB mutations impair GABAA receptor function.</title>
        <authorList>
            <person name="Janve V.S."/>
            <person name="Hernandez C.C."/>
            <person name="Verdier K.M."/>
            <person name="Hu N."/>
            <person name="Macdonald R.L."/>
        </authorList>
    </citation>
    <scope>CHARACTERIZATION OF VARIANT DEE45 SER-246</scope>
    <scope>FUNCTION</scope>
    <scope>SUBCELLULAR LOCATION</scope>
</reference>
<proteinExistence type="evidence at protein level"/>
<keyword id="KW-0002">3D-structure</keyword>
<keyword id="KW-0025">Alternative splicing</keyword>
<keyword id="KW-1003">Cell membrane</keyword>
<keyword id="KW-0868">Chloride</keyword>
<keyword id="KW-0869">Chloride channel</keyword>
<keyword id="KW-0225">Disease variant</keyword>
<keyword id="KW-1015">Disulfide bond</keyword>
<keyword id="KW-0887">Epilepsy</keyword>
<keyword id="KW-0325">Glycoprotein</keyword>
<keyword id="KW-0407">Ion channel</keyword>
<keyword id="KW-0406">Ion transport</keyword>
<keyword id="KW-1071">Ligand-gated ion channel</keyword>
<keyword id="KW-0472">Membrane</keyword>
<keyword id="KW-0628">Postsynaptic cell membrane</keyword>
<keyword id="KW-1267">Proteomics identification</keyword>
<keyword id="KW-0675">Receptor</keyword>
<keyword id="KW-1185">Reference proteome</keyword>
<keyword id="KW-0732">Signal</keyword>
<keyword id="KW-0770">Synapse</keyword>
<keyword id="KW-0812">Transmembrane</keyword>
<keyword id="KW-1133">Transmembrane helix</keyword>
<keyword id="KW-0813">Transport</keyword>
<comment type="function">
    <text evidence="3 4 8 10 12">Beta subunit of the heteropentameric ligand-gated chloride channel gated by gamma-aminobutyric acid (GABA), a major inhibitory neurotransmitter in the brain (PubMed:10449790, PubMed:16412217, PubMed:26950270). GABA-gated chloride channels, also named GABA(A) receptors (GABAAR), consist of five subunits arranged around a central pore and contain one or two GABA active binding sites located at the alpha and beta subunit interfaces, depending on subunit composition (By similarity). When activated by GABA, GABAARs selectively allow the flow of chloride anions across the cell membrane down their electrochemical gradient (PubMed:10449790, PubMed:16412217, PubMed:26950270). Chloride influx into the postsynaptic neuron following GABAAR opening decreases the neuron ability to generate a new action potential, thereby reducing nerve transmission (PubMed:16412217, PubMed:26950270). Beta-containing GABAARs can simultaneously bind GABA and histamine where histamine binds at the interface of two neighboring beta subunits, which may be involved in the regulation of sleep and wakefulness (By similarity).</text>
</comment>
<comment type="catalytic activity">
    <reaction evidence="8 10">
        <text>chloride(in) = chloride(out)</text>
        <dbReference type="Rhea" id="RHEA:29823"/>
        <dbReference type="ChEBI" id="CHEBI:17996"/>
    </reaction>
</comment>
<comment type="activity regulation">
    <text evidence="6 10">Potentiated by etomidate, propofol, pregnanolone and flurazepam (PubMed:16412217). Potentiated by histamine (By similarity).</text>
</comment>
<comment type="subunit">
    <text evidence="5 8 10">Heteropentamer, formed by a combination of alpha (GABRA1-6), beta (GABRB1-3), gamma (GABRG1-3), delta (GABRD), epsilon (GABRE), rho (GABRR1-3), pi (GABRP) and theta (GABRQ) chains, each subunit exhibiting distinct physiological and pharmacological properties (PubMed:10449790, PubMed:16412217). Binds UBQLN1 (By similarity).</text>
</comment>
<comment type="subcellular location">
    <subcellularLocation>
        <location evidence="1">Postsynaptic cell membrane</location>
        <topology evidence="1">Multi-pass membrane protein</topology>
    </subcellularLocation>
    <subcellularLocation>
        <location evidence="12">Cell membrane</location>
        <topology evidence="1">Multi-pass membrane protein</topology>
    </subcellularLocation>
</comment>
<comment type="alternative products">
    <event type="alternative splicing"/>
    <isoform>
        <id>P18505-1</id>
        <name>1</name>
        <sequence type="displayed"/>
    </isoform>
    <isoform>
        <id>P18505-2</id>
        <name>2</name>
        <name>B</name>
        <sequence type="described" ref="VSP_055900 VSP_055901"/>
    </isoform>
</comment>
<comment type="domain">
    <text evidence="3">GABAARs subunits share a common topological structure: a peptide sequence made up of a long extracellular N-terminal, four transmembrane domains, intracellular or cytoplasmic domain located between the third and the fourth transmembrane domains.</text>
</comment>
<comment type="disease" evidence="11 12 13">
    <disease id="DI-04844">
        <name>Developmental and epileptic encephalopathy 45</name>
        <acronym>DEE45</acronym>
        <description>A form of epileptic encephalopathy, a heterogeneous group of severe early-onset epilepsies characterized by refractory seizures, neurodevelopmental impairment, and poor prognosis. Development is normal prior to seizure onset, after which cognitive and motor delays become apparent.</description>
        <dbReference type="MIM" id="617153"/>
    </disease>
    <text>The disease is caused by variants affecting the gene represented in this entry.</text>
</comment>
<comment type="similarity">
    <text evidence="16">Belongs to the ligand-gated ion channel (TC 1.A.9) family. Gamma-aminobutyric acid receptor (TC 1.A.9.5) subfamily. GABRB1 sub-subfamily.</text>
</comment>
<comment type="online information" name="Protein Spotlight">
    <link uri="https://www.proteinspotlight.org/back_issues/056"/>
    <text>Forbidden fruit - Issue 56 of March 2005</text>
</comment>
<accession>P18505</accession>
<accession>B2R6U7</accession>
<accession>D6REL3</accession>
<accession>Q16166</accession>
<accession>Q8TBK3</accession>